<accession>A0B9W6</accession>
<reference key="1">
    <citation type="submission" date="2006-10" db="EMBL/GenBank/DDBJ databases">
        <title>Complete sequence of Methanosaeta thermophila PT.</title>
        <authorList>
            <consortium name="US DOE Joint Genome Institute"/>
            <person name="Copeland A."/>
            <person name="Lucas S."/>
            <person name="Lapidus A."/>
            <person name="Barry K."/>
            <person name="Detter J.C."/>
            <person name="Glavina del Rio T."/>
            <person name="Hammon N."/>
            <person name="Israni S."/>
            <person name="Pitluck S."/>
            <person name="Chain P."/>
            <person name="Malfatti S."/>
            <person name="Shin M."/>
            <person name="Vergez L."/>
            <person name="Schmutz J."/>
            <person name="Larimer F."/>
            <person name="Land M."/>
            <person name="Hauser L."/>
            <person name="Kyrpides N."/>
            <person name="Kim E."/>
            <person name="Smith K.S."/>
            <person name="Ingram-Smith C."/>
            <person name="Richardson P."/>
        </authorList>
    </citation>
    <scope>NUCLEOTIDE SEQUENCE [LARGE SCALE GENOMIC DNA]</scope>
    <source>
        <strain>DSM 6194 / JCM 14653 / NBRC 101360 / PT</strain>
    </source>
</reference>
<sequence>MAKKAGSKLPKRKEEFTYRGYRVSELAKMRLEEIAELLPSRQRRTLRRGLSKEHRKFMAKLRARGTAKTHLRDAIVLPEMVGKVVEIHNGKTFQRVEIIPEMIGHYLGEYALTRARVIHGAAGVGATRSSKFVPLK</sequence>
<feature type="chain" id="PRO_1000051076" description="Small ribosomal subunit protein uS19">
    <location>
        <begin position="1"/>
        <end position="136"/>
    </location>
</feature>
<evidence type="ECO:0000255" key="1">
    <source>
        <dbReference type="HAMAP-Rule" id="MF_00531"/>
    </source>
</evidence>
<evidence type="ECO:0000305" key="2"/>
<proteinExistence type="inferred from homology"/>
<name>RS19_METTP</name>
<keyword id="KW-1185">Reference proteome</keyword>
<keyword id="KW-0687">Ribonucleoprotein</keyword>
<keyword id="KW-0689">Ribosomal protein</keyword>
<keyword id="KW-0694">RNA-binding</keyword>
<keyword id="KW-0699">rRNA-binding</keyword>
<dbReference type="EMBL" id="CP000477">
    <property type="protein sequence ID" value="ABK15490.1"/>
    <property type="molecule type" value="Genomic_DNA"/>
</dbReference>
<dbReference type="RefSeq" id="WP_011696868.1">
    <property type="nucleotide sequence ID" value="NC_008553.1"/>
</dbReference>
<dbReference type="SMR" id="A0B9W6"/>
<dbReference type="STRING" id="349307.Mthe_1724"/>
<dbReference type="GeneID" id="4462917"/>
<dbReference type="KEGG" id="mtp:Mthe_1724"/>
<dbReference type="HOGENOM" id="CLU_097347_1_0_2"/>
<dbReference type="OrthoDB" id="30559at2157"/>
<dbReference type="Proteomes" id="UP000000674">
    <property type="component" value="Chromosome"/>
</dbReference>
<dbReference type="GO" id="GO:0022627">
    <property type="term" value="C:cytosolic small ribosomal subunit"/>
    <property type="evidence" value="ECO:0007669"/>
    <property type="project" value="TreeGrafter"/>
</dbReference>
<dbReference type="GO" id="GO:0019843">
    <property type="term" value="F:rRNA binding"/>
    <property type="evidence" value="ECO:0007669"/>
    <property type="project" value="UniProtKB-UniRule"/>
</dbReference>
<dbReference type="GO" id="GO:0003735">
    <property type="term" value="F:structural constituent of ribosome"/>
    <property type="evidence" value="ECO:0007669"/>
    <property type="project" value="InterPro"/>
</dbReference>
<dbReference type="GO" id="GO:0000028">
    <property type="term" value="P:ribosomal small subunit assembly"/>
    <property type="evidence" value="ECO:0007669"/>
    <property type="project" value="TreeGrafter"/>
</dbReference>
<dbReference type="GO" id="GO:0006412">
    <property type="term" value="P:translation"/>
    <property type="evidence" value="ECO:0007669"/>
    <property type="project" value="UniProtKB-UniRule"/>
</dbReference>
<dbReference type="FunFam" id="3.30.860.10:FF:000002">
    <property type="entry name" value="40S ribosomal protein S15"/>
    <property type="match status" value="1"/>
</dbReference>
<dbReference type="Gene3D" id="3.30.860.10">
    <property type="entry name" value="30s Ribosomal Protein S19, Chain A"/>
    <property type="match status" value="1"/>
</dbReference>
<dbReference type="HAMAP" id="MF_00531">
    <property type="entry name" value="Ribosomal_uS19"/>
    <property type="match status" value="1"/>
</dbReference>
<dbReference type="InterPro" id="IPR002222">
    <property type="entry name" value="Ribosomal_uS19"/>
</dbReference>
<dbReference type="InterPro" id="IPR020934">
    <property type="entry name" value="Ribosomal_uS19_CS"/>
</dbReference>
<dbReference type="InterPro" id="IPR005713">
    <property type="entry name" value="Ribosomal_uS19_euk/arc"/>
</dbReference>
<dbReference type="InterPro" id="IPR023575">
    <property type="entry name" value="Ribosomal_uS19_SF"/>
</dbReference>
<dbReference type="NCBIfam" id="NF003121">
    <property type="entry name" value="PRK04038.1"/>
    <property type="match status" value="1"/>
</dbReference>
<dbReference type="NCBIfam" id="TIGR01025">
    <property type="entry name" value="uS19_arch"/>
    <property type="match status" value="1"/>
</dbReference>
<dbReference type="PANTHER" id="PTHR11880">
    <property type="entry name" value="RIBOSOMAL PROTEIN S19P FAMILY MEMBER"/>
    <property type="match status" value="1"/>
</dbReference>
<dbReference type="PANTHER" id="PTHR11880:SF2">
    <property type="entry name" value="SMALL RIBOSOMAL SUBUNIT PROTEIN US19"/>
    <property type="match status" value="1"/>
</dbReference>
<dbReference type="Pfam" id="PF00203">
    <property type="entry name" value="Ribosomal_S19"/>
    <property type="match status" value="1"/>
</dbReference>
<dbReference type="PIRSF" id="PIRSF002144">
    <property type="entry name" value="Ribosomal_S19"/>
    <property type="match status" value="1"/>
</dbReference>
<dbReference type="PRINTS" id="PR00975">
    <property type="entry name" value="RIBOSOMALS19"/>
</dbReference>
<dbReference type="SUPFAM" id="SSF54570">
    <property type="entry name" value="Ribosomal protein S19"/>
    <property type="match status" value="1"/>
</dbReference>
<dbReference type="PROSITE" id="PS00323">
    <property type="entry name" value="RIBOSOMAL_S19"/>
    <property type="match status" value="1"/>
</dbReference>
<organism>
    <name type="scientific">Methanothrix thermoacetophila (strain DSM 6194 / JCM 14653 / NBRC 101360 / PT)</name>
    <name type="common">Methanosaeta thermophila</name>
    <dbReference type="NCBI Taxonomy" id="349307"/>
    <lineage>
        <taxon>Archaea</taxon>
        <taxon>Methanobacteriati</taxon>
        <taxon>Methanobacteriota</taxon>
        <taxon>Stenosarchaea group</taxon>
        <taxon>Methanomicrobia</taxon>
        <taxon>Methanotrichales</taxon>
        <taxon>Methanotrichaceae</taxon>
        <taxon>Methanothrix</taxon>
    </lineage>
</organism>
<gene>
    <name evidence="1" type="primary">rps19</name>
    <name type="ordered locus">Mthe_1724</name>
</gene>
<protein>
    <recommendedName>
        <fullName evidence="1">Small ribosomal subunit protein uS19</fullName>
    </recommendedName>
    <alternativeName>
        <fullName evidence="2">30S ribosomal protein S19</fullName>
    </alternativeName>
</protein>
<comment type="function">
    <text evidence="1">Protein S19 forms a complex with S13 that binds strongly to the 16S ribosomal RNA.</text>
</comment>
<comment type="similarity">
    <text evidence="1">Belongs to the universal ribosomal protein uS19 family.</text>
</comment>